<organism>
    <name type="scientific">Rhodopseudomonas palustris (strain HaA2)</name>
    <dbReference type="NCBI Taxonomy" id="316058"/>
    <lineage>
        <taxon>Bacteria</taxon>
        <taxon>Pseudomonadati</taxon>
        <taxon>Pseudomonadota</taxon>
        <taxon>Alphaproteobacteria</taxon>
        <taxon>Hyphomicrobiales</taxon>
        <taxon>Nitrobacteraceae</taxon>
        <taxon>Rhodopseudomonas</taxon>
    </lineage>
</organism>
<keyword id="KW-0028">Amino-acid biosynthesis</keyword>
<keyword id="KW-0057">Aromatic amino acid biosynthesis</keyword>
<keyword id="KW-0274">FAD</keyword>
<keyword id="KW-0285">Flavoprotein</keyword>
<keyword id="KW-0288">FMN</keyword>
<keyword id="KW-0456">Lyase</keyword>
<keyword id="KW-0521">NADP</keyword>
<keyword id="KW-1185">Reference proteome</keyword>
<gene>
    <name evidence="1" type="primary">aroC</name>
    <name type="ordered locus">RPB_1212</name>
</gene>
<evidence type="ECO:0000255" key="1">
    <source>
        <dbReference type="HAMAP-Rule" id="MF_00300"/>
    </source>
</evidence>
<accession>Q2J0T8</accession>
<proteinExistence type="inferred from homology"/>
<name>AROC_RHOP2</name>
<comment type="function">
    <text evidence="1">Catalyzes the anti-1,4-elimination of the C-3 phosphate and the C-6 proR hydrogen from 5-enolpyruvylshikimate-3-phosphate (EPSP) to yield chorismate, which is the branch point compound that serves as the starting substrate for the three terminal pathways of aromatic amino acid biosynthesis. This reaction introduces a second double bond into the aromatic ring system.</text>
</comment>
<comment type="catalytic activity">
    <reaction evidence="1">
        <text>5-O-(1-carboxyvinyl)-3-phosphoshikimate = chorismate + phosphate</text>
        <dbReference type="Rhea" id="RHEA:21020"/>
        <dbReference type="ChEBI" id="CHEBI:29748"/>
        <dbReference type="ChEBI" id="CHEBI:43474"/>
        <dbReference type="ChEBI" id="CHEBI:57701"/>
        <dbReference type="EC" id="4.2.3.5"/>
    </reaction>
</comment>
<comment type="cofactor">
    <cofactor evidence="1">
        <name>FMNH2</name>
        <dbReference type="ChEBI" id="CHEBI:57618"/>
    </cofactor>
    <text evidence="1">Reduced FMN (FMNH(2)).</text>
</comment>
<comment type="pathway">
    <text evidence="1">Metabolic intermediate biosynthesis; chorismate biosynthesis; chorismate from D-erythrose 4-phosphate and phosphoenolpyruvate: step 7/7.</text>
</comment>
<comment type="subunit">
    <text evidence="1">Homotetramer.</text>
</comment>
<comment type="similarity">
    <text evidence="1">Belongs to the chorismate synthase family.</text>
</comment>
<reference key="1">
    <citation type="submission" date="2006-01" db="EMBL/GenBank/DDBJ databases">
        <title>Complete sequence of Rhodopseudomonas palustris HaA2.</title>
        <authorList>
            <consortium name="US DOE Joint Genome Institute"/>
            <person name="Copeland A."/>
            <person name="Lucas S."/>
            <person name="Lapidus A."/>
            <person name="Barry K."/>
            <person name="Detter J.C."/>
            <person name="Glavina T."/>
            <person name="Hammon N."/>
            <person name="Israni S."/>
            <person name="Pitluck S."/>
            <person name="Chain P."/>
            <person name="Malfatti S."/>
            <person name="Shin M."/>
            <person name="Vergez L."/>
            <person name="Schmutz J."/>
            <person name="Larimer F."/>
            <person name="Land M."/>
            <person name="Hauser L."/>
            <person name="Pelletier D.A."/>
            <person name="Kyrpides N."/>
            <person name="Anderson I."/>
            <person name="Oda Y."/>
            <person name="Harwood C.S."/>
            <person name="Richardson P."/>
        </authorList>
    </citation>
    <scope>NUCLEOTIDE SEQUENCE [LARGE SCALE GENOMIC DNA]</scope>
    <source>
        <strain>HaA2</strain>
    </source>
</reference>
<sequence>MSFNTFGHMFRVTTFGESHGVAIGCVVDGCPPLIPLTEADIQGDLDRRRPGQSRFTTQRQEADQVKILSGVMAHPETGVQVTTGTPIALLIENTDQRSKDYSEIQNKFRPGHADFTYEAKYGIRDYRGGGRSSARETATRVAAGAVARKVIAGMTVRGALVQIGPHQIDRDKWDWAEIGNNPFFCPDKDKAAFFADYLDGIRKSGSSIGAVIEVVAEGVPAGLGAPIYAKLDTDLAAALMSINAVKGVEIGDGFATAALTGEENADEMRMGNAGPQFLSNHAGGILGGISTGQPVVARFAVKPTSSILSPRKTIDRAGHDTDILTKGRHDPCVGIRAVPVGEAMVACVLADHLLRHRGQVG</sequence>
<protein>
    <recommendedName>
        <fullName evidence="1">Chorismate synthase</fullName>
        <shortName evidence="1">CS</shortName>
        <ecNumber evidence="1">4.2.3.5</ecNumber>
    </recommendedName>
    <alternativeName>
        <fullName evidence="1">5-enolpyruvylshikimate-3-phosphate phospholyase</fullName>
    </alternativeName>
</protein>
<dbReference type="EC" id="4.2.3.5" evidence="1"/>
<dbReference type="EMBL" id="CP000250">
    <property type="protein sequence ID" value="ABD05922.1"/>
    <property type="molecule type" value="Genomic_DNA"/>
</dbReference>
<dbReference type="RefSeq" id="WP_011440111.1">
    <property type="nucleotide sequence ID" value="NC_007778.1"/>
</dbReference>
<dbReference type="SMR" id="Q2J0T8"/>
<dbReference type="STRING" id="316058.RPB_1212"/>
<dbReference type="KEGG" id="rpb:RPB_1212"/>
<dbReference type="eggNOG" id="COG0082">
    <property type="taxonomic scope" value="Bacteria"/>
</dbReference>
<dbReference type="HOGENOM" id="CLU_034547_0_0_5"/>
<dbReference type="OrthoDB" id="9771806at2"/>
<dbReference type="UniPathway" id="UPA00053">
    <property type="reaction ID" value="UER00090"/>
</dbReference>
<dbReference type="Proteomes" id="UP000008809">
    <property type="component" value="Chromosome"/>
</dbReference>
<dbReference type="GO" id="GO:0005829">
    <property type="term" value="C:cytosol"/>
    <property type="evidence" value="ECO:0007669"/>
    <property type="project" value="TreeGrafter"/>
</dbReference>
<dbReference type="GO" id="GO:0004107">
    <property type="term" value="F:chorismate synthase activity"/>
    <property type="evidence" value="ECO:0007669"/>
    <property type="project" value="UniProtKB-UniRule"/>
</dbReference>
<dbReference type="GO" id="GO:0010181">
    <property type="term" value="F:FMN binding"/>
    <property type="evidence" value="ECO:0007669"/>
    <property type="project" value="TreeGrafter"/>
</dbReference>
<dbReference type="GO" id="GO:0008652">
    <property type="term" value="P:amino acid biosynthetic process"/>
    <property type="evidence" value="ECO:0007669"/>
    <property type="project" value="UniProtKB-KW"/>
</dbReference>
<dbReference type="GO" id="GO:0009073">
    <property type="term" value="P:aromatic amino acid family biosynthetic process"/>
    <property type="evidence" value="ECO:0007669"/>
    <property type="project" value="UniProtKB-KW"/>
</dbReference>
<dbReference type="GO" id="GO:0009423">
    <property type="term" value="P:chorismate biosynthetic process"/>
    <property type="evidence" value="ECO:0007669"/>
    <property type="project" value="UniProtKB-UniRule"/>
</dbReference>
<dbReference type="CDD" id="cd07304">
    <property type="entry name" value="Chorismate_synthase"/>
    <property type="match status" value="1"/>
</dbReference>
<dbReference type="Gene3D" id="3.60.150.10">
    <property type="entry name" value="Chorismate synthase AroC"/>
    <property type="match status" value="1"/>
</dbReference>
<dbReference type="HAMAP" id="MF_00300">
    <property type="entry name" value="Chorismate_synth"/>
    <property type="match status" value="1"/>
</dbReference>
<dbReference type="InterPro" id="IPR000453">
    <property type="entry name" value="Chorismate_synth"/>
</dbReference>
<dbReference type="InterPro" id="IPR035904">
    <property type="entry name" value="Chorismate_synth_AroC_sf"/>
</dbReference>
<dbReference type="InterPro" id="IPR020541">
    <property type="entry name" value="Chorismate_synthase_CS"/>
</dbReference>
<dbReference type="NCBIfam" id="TIGR00033">
    <property type="entry name" value="aroC"/>
    <property type="match status" value="1"/>
</dbReference>
<dbReference type="NCBIfam" id="NF003793">
    <property type="entry name" value="PRK05382.1"/>
    <property type="match status" value="1"/>
</dbReference>
<dbReference type="PANTHER" id="PTHR21085">
    <property type="entry name" value="CHORISMATE SYNTHASE"/>
    <property type="match status" value="1"/>
</dbReference>
<dbReference type="PANTHER" id="PTHR21085:SF0">
    <property type="entry name" value="CHORISMATE SYNTHASE"/>
    <property type="match status" value="1"/>
</dbReference>
<dbReference type="Pfam" id="PF01264">
    <property type="entry name" value="Chorismate_synt"/>
    <property type="match status" value="1"/>
</dbReference>
<dbReference type="PIRSF" id="PIRSF001456">
    <property type="entry name" value="Chorismate_synth"/>
    <property type="match status" value="1"/>
</dbReference>
<dbReference type="SUPFAM" id="SSF103263">
    <property type="entry name" value="Chorismate synthase, AroC"/>
    <property type="match status" value="1"/>
</dbReference>
<dbReference type="PROSITE" id="PS00787">
    <property type="entry name" value="CHORISMATE_SYNTHASE_1"/>
    <property type="match status" value="1"/>
</dbReference>
<dbReference type="PROSITE" id="PS00788">
    <property type="entry name" value="CHORISMATE_SYNTHASE_2"/>
    <property type="match status" value="1"/>
</dbReference>
<dbReference type="PROSITE" id="PS00789">
    <property type="entry name" value="CHORISMATE_SYNTHASE_3"/>
    <property type="match status" value="1"/>
</dbReference>
<feature type="chain" id="PRO_0000256325" description="Chorismate synthase">
    <location>
        <begin position="1"/>
        <end position="361"/>
    </location>
</feature>
<feature type="binding site" evidence="1">
    <location>
        <position position="48"/>
    </location>
    <ligand>
        <name>NADP(+)</name>
        <dbReference type="ChEBI" id="CHEBI:58349"/>
    </ligand>
</feature>
<feature type="binding site" evidence="1">
    <location>
        <position position="54"/>
    </location>
    <ligand>
        <name>NADP(+)</name>
        <dbReference type="ChEBI" id="CHEBI:58349"/>
    </ligand>
</feature>
<feature type="binding site" evidence="1">
    <location>
        <begin position="131"/>
        <end position="133"/>
    </location>
    <ligand>
        <name>FMN</name>
        <dbReference type="ChEBI" id="CHEBI:58210"/>
    </ligand>
</feature>
<feature type="binding site" evidence="1">
    <location>
        <begin position="243"/>
        <end position="244"/>
    </location>
    <ligand>
        <name>FMN</name>
        <dbReference type="ChEBI" id="CHEBI:58210"/>
    </ligand>
</feature>
<feature type="binding site" evidence="1">
    <location>
        <position position="287"/>
    </location>
    <ligand>
        <name>FMN</name>
        <dbReference type="ChEBI" id="CHEBI:58210"/>
    </ligand>
</feature>
<feature type="binding site" evidence="1">
    <location>
        <begin position="302"/>
        <end position="306"/>
    </location>
    <ligand>
        <name>FMN</name>
        <dbReference type="ChEBI" id="CHEBI:58210"/>
    </ligand>
</feature>
<feature type="binding site" evidence="1">
    <location>
        <position position="328"/>
    </location>
    <ligand>
        <name>FMN</name>
        <dbReference type="ChEBI" id="CHEBI:58210"/>
    </ligand>
</feature>